<accession>Q8XU98</accession>
<proteinExistence type="inferred from homology"/>
<keyword id="KW-0560">Oxidoreductase</keyword>
<keyword id="KW-0663">Pyridoxal phosphate</keyword>
<keyword id="KW-1185">Reference proteome</keyword>
<reference key="1">
    <citation type="journal article" date="2002" name="Nature">
        <title>Genome sequence of the plant pathogen Ralstonia solanacearum.</title>
        <authorList>
            <person name="Salanoubat M."/>
            <person name="Genin S."/>
            <person name="Artiguenave F."/>
            <person name="Gouzy J."/>
            <person name="Mangenot S."/>
            <person name="Arlat M."/>
            <person name="Billault A."/>
            <person name="Brottier P."/>
            <person name="Camus J.-C."/>
            <person name="Cattolico L."/>
            <person name="Chandler M."/>
            <person name="Choisne N."/>
            <person name="Claudel-Renard C."/>
            <person name="Cunnac S."/>
            <person name="Demange N."/>
            <person name="Gaspin C."/>
            <person name="Lavie M."/>
            <person name="Moisan A."/>
            <person name="Robert C."/>
            <person name="Saurin W."/>
            <person name="Schiex T."/>
            <person name="Siguier P."/>
            <person name="Thebault P."/>
            <person name="Whalen M."/>
            <person name="Wincker P."/>
            <person name="Levy M."/>
            <person name="Weissenbach J."/>
            <person name="Boucher C.A."/>
        </authorList>
    </citation>
    <scope>NUCLEOTIDE SEQUENCE [LARGE SCALE GENOMIC DNA]</scope>
    <source>
        <strain>ATCC BAA-1114 / GMI1000</strain>
    </source>
</reference>
<organism>
    <name type="scientific">Ralstonia nicotianae (strain ATCC BAA-1114 / GMI1000)</name>
    <name type="common">Ralstonia solanacearum</name>
    <dbReference type="NCBI Taxonomy" id="267608"/>
    <lineage>
        <taxon>Bacteria</taxon>
        <taxon>Pseudomonadati</taxon>
        <taxon>Pseudomonadota</taxon>
        <taxon>Betaproteobacteria</taxon>
        <taxon>Burkholderiales</taxon>
        <taxon>Burkholderiaceae</taxon>
        <taxon>Ralstonia</taxon>
        <taxon>Ralstonia solanacearum species complex</taxon>
    </lineage>
</organism>
<dbReference type="EC" id="1.4.4.2" evidence="1"/>
<dbReference type="EMBL" id="AL646052">
    <property type="protein sequence ID" value="CAD17083.1"/>
    <property type="molecule type" value="Genomic_DNA"/>
</dbReference>
<dbReference type="RefSeq" id="WP_011003179.1">
    <property type="nucleotide sequence ID" value="NC_003295.1"/>
</dbReference>
<dbReference type="SMR" id="Q8XU98"/>
<dbReference type="STRING" id="267608.RSc3295"/>
<dbReference type="EnsemblBacteria" id="CAD17083">
    <property type="protein sequence ID" value="CAD17083"/>
    <property type="gene ID" value="RSc3295"/>
</dbReference>
<dbReference type="KEGG" id="rso:RSc3295"/>
<dbReference type="eggNOG" id="COG0403">
    <property type="taxonomic scope" value="Bacteria"/>
</dbReference>
<dbReference type="eggNOG" id="COG1003">
    <property type="taxonomic scope" value="Bacteria"/>
</dbReference>
<dbReference type="HOGENOM" id="CLU_004620_3_2_4"/>
<dbReference type="Proteomes" id="UP000001436">
    <property type="component" value="Chromosome"/>
</dbReference>
<dbReference type="GO" id="GO:0005829">
    <property type="term" value="C:cytosol"/>
    <property type="evidence" value="ECO:0007669"/>
    <property type="project" value="TreeGrafter"/>
</dbReference>
<dbReference type="GO" id="GO:0005960">
    <property type="term" value="C:glycine cleavage complex"/>
    <property type="evidence" value="ECO:0007669"/>
    <property type="project" value="TreeGrafter"/>
</dbReference>
<dbReference type="GO" id="GO:0016594">
    <property type="term" value="F:glycine binding"/>
    <property type="evidence" value="ECO:0007669"/>
    <property type="project" value="TreeGrafter"/>
</dbReference>
<dbReference type="GO" id="GO:0004375">
    <property type="term" value="F:glycine dehydrogenase (decarboxylating) activity"/>
    <property type="evidence" value="ECO:0007669"/>
    <property type="project" value="UniProtKB-EC"/>
</dbReference>
<dbReference type="GO" id="GO:0030170">
    <property type="term" value="F:pyridoxal phosphate binding"/>
    <property type="evidence" value="ECO:0007669"/>
    <property type="project" value="TreeGrafter"/>
</dbReference>
<dbReference type="GO" id="GO:0019464">
    <property type="term" value="P:glycine decarboxylation via glycine cleavage system"/>
    <property type="evidence" value="ECO:0007669"/>
    <property type="project" value="UniProtKB-UniRule"/>
</dbReference>
<dbReference type="CDD" id="cd00613">
    <property type="entry name" value="GDC-P"/>
    <property type="match status" value="2"/>
</dbReference>
<dbReference type="FunFam" id="3.40.640.10:FF:000005">
    <property type="entry name" value="Glycine dehydrogenase (decarboxylating), mitochondrial"/>
    <property type="match status" value="1"/>
</dbReference>
<dbReference type="FunFam" id="3.90.1150.10:FF:000007">
    <property type="entry name" value="Glycine dehydrogenase (decarboxylating), mitochondrial"/>
    <property type="match status" value="1"/>
</dbReference>
<dbReference type="FunFam" id="3.40.640.10:FF:000007">
    <property type="entry name" value="glycine dehydrogenase (Decarboxylating), mitochondrial"/>
    <property type="match status" value="1"/>
</dbReference>
<dbReference type="Gene3D" id="3.90.1150.10">
    <property type="entry name" value="Aspartate Aminotransferase, domain 1"/>
    <property type="match status" value="2"/>
</dbReference>
<dbReference type="Gene3D" id="3.40.640.10">
    <property type="entry name" value="Type I PLP-dependent aspartate aminotransferase-like (Major domain)"/>
    <property type="match status" value="2"/>
</dbReference>
<dbReference type="HAMAP" id="MF_00711">
    <property type="entry name" value="GcvP"/>
    <property type="match status" value="1"/>
</dbReference>
<dbReference type="InterPro" id="IPR003437">
    <property type="entry name" value="GcvP"/>
</dbReference>
<dbReference type="InterPro" id="IPR049316">
    <property type="entry name" value="GDC-P_C"/>
</dbReference>
<dbReference type="InterPro" id="IPR049315">
    <property type="entry name" value="GDC-P_N"/>
</dbReference>
<dbReference type="InterPro" id="IPR020581">
    <property type="entry name" value="GDC_P"/>
</dbReference>
<dbReference type="InterPro" id="IPR015424">
    <property type="entry name" value="PyrdxlP-dep_Trfase"/>
</dbReference>
<dbReference type="InterPro" id="IPR015421">
    <property type="entry name" value="PyrdxlP-dep_Trfase_major"/>
</dbReference>
<dbReference type="InterPro" id="IPR015422">
    <property type="entry name" value="PyrdxlP-dep_Trfase_small"/>
</dbReference>
<dbReference type="NCBIfam" id="TIGR00461">
    <property type="entry name" value="gcvP"/>
    <property type="match status" value="1"/>
</dbReference>
<dbReference type="NCBIfam" id="NF003346">
    <property type="entry name" value="PRK04366.1"/>
    <property type="match status" value="1"/>
</dbReference>
<dbReference type="PANTHER" id="PTHR11773:SF1">
    <property type="entry name" value="GLYCINE DEHYDROGENASE (DECARBOXYLATING), MITOCHONDRIAL"/>
    <property type="match status" value="1"/>
</dbReference>
<dbReference type="PANTHER" id="PTHR11773">
    <property type="entry name" value="GLYCINE DEHYDROGENASE, DECARBOXYLATING"/>
    <property type="match status" value="1"/>
</dbReference>
<dbReference type="Pfam" id="PF21478">
    <property type="entry name" value="GcvP2_C"/>
    <property type="match status" value="1"/>
</dbReference>
<dbReference type="Pfam" id="PF02347">
    <property type="entry name" value="GDC-P"/>
    <property type="match status" value="2"/>
</dbReference>
<dbReference type="SUPFAM" id="SSF53383">
    <property type="entry name" value="PLP-dependent transferases"/>
    <property type="match status" value="2"/>
</dbReference>
<name>GCSP_RALN1</name>
<evidence type="ECO:0000255" key="1">
    <source>
        <dbReference type="HAMAP-Rule" id="MF_00711"/>
    </source>
</evidence>
<feature type="chain" id="PRO_0000166930" description="Glycine dehydrogenase (decarboxylating)">
    <location>
        <begin position="1"/>
        <end position="982"/>
    </location>
</feature>
<feature type="modified residue" description="N6-(pyridoxal phosphate)lysine" evidence="1">
    <location>
        <position position="729"/>
    </location>
</feature>
<gene>
    <name evidence="1" type="primary">gcvP</name>
    <name type="ordered locus">RSc3295</name>
    <name type="ORF">RS02524</name>
</gene>
<comment type="function">
    <text evidence="1">The glycine cleavage system catalyzes the degradation of glycine. The P protein binds the alpha-amino group of glycine through its pyridoxal phosphate cofactor; CO(2) is released and the remaining methylamine moiety is then transferred to the lipoamide cofactor of the H protein.</text>
</comment>
<comment type="catalytic activity">
    <reaction evidence="1">
        <text>N(6)-[(R)-lipoyl]-L-lysyl-[glycine-cleavage complex H protein] + glycine + H(+) = N(6)-[(R)-S(8)-aminomethyldihydrolipoyl]-L-lysyl-[glycine-cleavage complex H protein] + CO2</text>
        <dbReference type="Rhea" id="RHEA:24304"/>
        <dbReference type="Rhea" id="RHEA-COMP:10494"/>
        <dbReference type="Rhea" id="RHEA-COMP:10495"/>
        <dbReference type="ChEBI" id="CHEBI:15378"/>
        <dbReference type="ChEBI" id="CHEBI:16526"/>
        <dbReference type="ChEBI" id="CHEBI:57305"/>
        <dbReference type="ChEBI" id="CHEBI:83099"/>
        <dbReference type="ChEBI" id="CHEBI:83143"/>
        <dbReference type="EC" id="1.4.4.2"/>
    </reaction>
</comment>
<comment type="cofactor">
    <cofactor evidence="1">
        <name>pyridoxal 5'-phosphate</name>
        <dbReference type="ChEBI" id="CHEBI:597326"/>
    </cofactor>
</comment>
<comment type="subunit">
    <text evidence="1">The glycine cleavage system is composed of four proteins: P, T, L and H.</text>
</comment>
<comment type="similarity">
    <text evidence="1">Belongs to the GcvP family.</text>
</comment>
<sequence>MNAPHPASAALTQTLAARPTLAELEARDAFAERHIGPSPDEQAAMLATLGYASRAALIDAVIPPAIRRQDGMPLGEFTQPLTEEAALAKLRGIAGQNRVVRSLIGQGYYGTHTPGVILRNILENPAWYTAYTPYQPEISQGRLEAMLNFQQMVMDLTAMDIANASMLDEATAAAEAMTLLQRVGKHPSNVFFVADDVLPQTLDVVRTRAEPIGVQVVTGPAADAAKHNAFGVLLQYPGTGGALLGGLSTYQALTDAVHAAGGLVVAAADLLALTLLAAPGEWGADVVIGNTQRFGVPFGFGGPHAGYMAVRDAFKRSMPGRLVGVTVDAQGNPAYRLALQTREQHIRREKATSNICTAQVLLGVMASMYAVYHGPQGLKRIAQRVHRLTATLAAGLRQIGYTLEAGAFFDTLTVATGPRTANLHIAAQAHGFNLRQIDDGRLGVSLDETVTRAEVVALWEIFAHAAHAGAPDFDQVEAGIADAFPASLARQSAYLTHPVFNAHHSEHEMLRYLRSLADKDLALDRTMIPLGSCTMKLNATAEMLPVTWPEFANIHPFAPADQTVGYREMIDQLEQMLCAATGYAAVSLQPNAGSQGEYAGLLIIHAYHASRGESHRDVCLIPSSAHGTNPASAQMAGMKVVVVACDERGNVDLADLEKKAAEHSANLAAIMITYPSTHGVFEEGVKRVCEIVHSHGGQVYVDGANMNAMVGTAAPGHFGGDVSHLNLHKTFCIPHGGGGPGVGPVAVGAHLAPFLPGRAASGEDASQNIGAVSAAPFGSASILPISWMYIAMMGAAGLTAATEAAILSANYVARRLSPYYPVLYTGAHGLVAHECILDIRPLQKESGISNEDIAKRLMDFGFHAPTMSFPVPGTLMIEPTESEPKVELDRFIDAMIAIRGEVDQVISGAFDREDNPLKHAPHTAQVVMADDWSHRYTREQAAYPVASLRTRKYWPPVGRADNVYGDRNLFCACVPMSEYAQD</sequence>
<protein>
    <recommendedName>
        <fullName evidence="1">Glycine dehydrogenase (decarboxylating)</fullName>
        <ecNumber evidence="1">1.4.4.2</ecNumber>
    </recommendedName>
    <alternativeName>
        <fullName evidence="1">Glycine cleavage system P-protein</fullName>
    </alternativeName>
    <alternativeName>
        <fullName evidence="1">Glycine decarboxylase</fullName>
    </alternativeName>
    <alternativeName>
        <fullName evidence="1">Glycine dehydrogenase (aminomethyl-transferring)</fullName>
    </alternativeName>
</protein>